<reference key="1">
    <citation type="submission" date="2006-09" db="EMBL/GenBank/DDBJ databases">
        <title>NISC comparative sequencing initiative.</title>
        <authorList>
            <person name="Antonellis A."/>
            <person name="Ayele K."/>
            <person name="Benjamin B."/>
            <person name="Blakesley R.W."/>
            <person name="Boakye A."/>
            <person name="Bouffard G.G."/>
            <person name="Brinkley C."/>
            <person name="Brooks S."/>
            <person name="Chu G."/>
            <person name="Coleman H."/>
            <person name="Engle J."/>
            <person name="Gestole M."/>
            <person name="Greene A."/>
            <person name="Guan X."/>
            <person name="Gupta J."/>
            <person name="Haghighi P."/>
            <person name="Han J."/>
            <person name="Hansen N."/>
            <person name="Ho S.-L."/>
            <person name="Hu P."/>
            <person name="Hunter G."/>
            <person name="Hurle B."/>
            <person name="Idol J.R."/>
            <person name="Kwong P."/>
            <person name="Laric P."/>
            <person name="Larson S."/>
            <person name="Lee-Lin S.-Q."/>
            <person name="Legaspi R."/>
            <person name="Madden M."/>
            <person name="Maduro Q.L."/>
            <person name="Maduro V.B."/>
            <person name="Margulies E.H."/>
            <person name="Masiello C."/>
            <person name="Maskeri B."/>
            <person name="McDowell J."/>
            <person name="Mojidi H.A."/>
            <person name="Mullikin J.C."/>
            <person name="Oestreicher J.S."/>
            <person name="Park M."/>
            <person name="Portnoy M.E."/>
            <person name="Prasad A."/>
            <person name="Puri O."/>
            <person name="Reddix-Dugue N."/>
            <person name="Schandler K."/>
            <person name="Schueler M.G."/>
            <person name="Sison C."/>
            <person name="Stantripop S."/>
            <person name="Stephen E."/>
            <person name="Taye A."/>
            <person name="Thomas J.W."/>
            <person name="Thomas P.J."/>
            <person name="Tsipouri V."/>
            <person name="Ung L."/>
            <person name="Vogt J.L."/>
            <person name="Wetherby K.D."/>
            <person name="Young A."/>
            <person name="Green E.D."/>
        </authorList>
    </citation>
    <scope>NUCLEOTIDE SEQUENCE [LARGE SCALE GENOMIC DNA]</scope>
</reference>
<gene>
    <name evidence="1" type="primary">CFTR</name>
    <name type="synonym">ABCC7</name>
</gene>
<feature type="chain" id="PRO_0000260776" description="Cystic fibrosis transmembrane conductance regulator">
    <location>
        <begin position="1"/>
        <end position="1481"/>
    </location>
</feature>
<feature type="topological domain" description="Cytoplasmic" evidence="1">
    <location>
        <begin position="1"/>
        <end position="77"/>
    </location>
</feature>
<feature type="transmembrane region" description="Helical; Name=1" evidence="1">
    <location>
        <begin position="78"/>
        <end position="98"/>
    </location>
</feature>
<feature type="topological domain" description="Extracellular" evidence="1">
    <location>
        <begin position="99"/>
        <end position="122"/>
    </location>
</feature>
<feature type="transmembrane region" description="Helical; Name=2" evidence="1">
    <location>
        <begin position="123"/>
        <end position="146"/>
    </location>
</feature>
<feature type="topological domain" description="Cytoplasmic" evidence="1">
    <location>
        <begin position="147"/>
        <end position="195"/>
    </location>
</feature>
<feature type="transmembrane region" description="Helical; Name=3" evidence="1">
    <location>
        <begin position="196"/>
        <end position="216"/>
    </location>
</feature>
<feature type="topological domain" description="Extracellular" evidence="1">
    <location>
        <begin position="217"/>
        <end position="222"/>
    </location>
</feature>
<feature type="transmembrane region" description="Helical; Name=4" evidence="1">
    <location>
        <begin position="223"/>
        <end position="243"/>
    </location>
</feature>
<feature type="topological domain" description="Cytoplasmic" evidence="1">
    <location>
        <begin position="244"/>
        <end position="298"/>
    </location>
</feature>
<feature type="transmembrane region" description="Helical; Name=5" evidence="1">
    <location>
        <begin position="299"/>
        <end position="319"/>
    </location>
</feature>
<feature type="topological domain" description="Extracellular" evidence="1">
    <location>
        <begin position="320"/>
        <end position="339"/>
    </location>
</feature>
<feature type="transmembrane region" description="Helical; Name=6" evidence="1">
    <location>
        <begin position="340"/>
        <end position="358"/>
    </location>
</feature>
<feature type="topological domain" description="Cytoplasmic" evidence="1">
    <location>
        <begin position="359"/>
        <end position="858"/>
    </location>
</feature>
<feature type="transmembrane region" description="Helical; Name=7" evidence="1">
    <location>
        <begin position="859"/>
        <end position="879"/>
    </location>
</feature>
<feature type="topological domain" description="Extracellular" evidence="1">
    <location>
        <begin position="880"/>
        <end position="918"/>
    </location>
</feature>
<feature type="transmembrane region" description="Discontinuously helical; Name=8" evidence="1">
    <location>
        <begin position="919"/>
        <end position="939"/>
    </location>
</feature>
<feature type="topological domain" description="Cytoplasmic" evidence="1">
    <location>
        <begin position="940"/>
        <end position="990"/>
    </location>
</feature>
<feature type="transmembrane region" description="Helical; Name=9" evidence="1">
    <location>
        <begin position="991"/>
        <end position="1011"/>
    </location>
</feature>
<feature type="topological domain" description="Extracellular" evidence="1">
    <location>
        <begin position="1012"/>
        <end position="1013"/>
    </location>
</feature>
<feature type="transmembrane region" description="Helical; Name=10" evidence="1">
    <location>
        <begin position="1014"/>
        <end position="1034"/>
    </location>
</feature>
<feature type="topological domain" description="Cytoplasmic" evidence="1">
    <location>
        <begin position="1035"/>
        <end position="1095"/>
    </location>
</feature>
<feature type="transmembrane region" description="Helical; Name=11" evidence="1">
    <location>
        <begin position="1096"/>
        <end position="1116"/>
    </location>
</feature>
<feature type="topological domain" description="Extracellular" evidence="1">
    <location>
        <begin position="1117"/>
        <end position="1130"/>
    </location>
</feature>
<feature type="transmembrane region" description="Helical; Name=12" evidence="1">
    <location>
        <begin position="1131"/>
        <end position="1151"/>
    </location>
</feature>
<feature type="topological domain" description="Cytoplasmic" evidence="1">
    <location>
        <begin position="1152"/>
        <end position="1481"/>
    </location>
</feature>
<feature type="domain" description="ABC transmembrane type-1 1" evidence="6">
    <location>
        <begin position="81"/>
        <end position="365"/>
    </location>
</feature>
<feature type="domain" description="ABC transporter 1" evidence="5">
    <location>
        <begin position="423"/>
        <end position="645"/>
    </location>
</feature>
<feature type="domain" description="ABC transmembrane type-1 2" evidence="6">
    <location>
        <begin position="859"/>
        <end position="1155"/>
    </location>
</feature>
<feature type="domain" description="ABC transporter 2" evidence="5">
    <location>
        <begin position="1211"/>
        <end position="1444"/>
    </location>
</feature>
<feature type="region of interest" description="Disordered R region" evidence="1">
    <location>
        <begin position="653"/>
        <end position="831"/>
    </location>
</feature>
<feature type="region of interest" description="Interaction with GORASP2" evidence="1">
    <location>
        <begin position="1387"/>
        <end position="1481"/>
    </location>
</feature>
<feature type="region of interest" description="Disordered" evidence="7">
    <location>
        <begin position="1452"/>
        <end position="1481"/>
    </location>
</feature>
<feature type="short sequence motif" description="PDZ-binding" evidence="1">
    <location>
        <begin position="1479"/>
        <end position="1481"/>
    </location>
</feature>
<feature type="compositionally biased region" description="Low complexity" evidence="7">
    <location>
        <begin position="1453"/>
        <end position="1464"/>
    </location>
</feature>
<feature type="compositionally biased region" description="Acidic residues" evidence="7">
    <location>
        <begin position="1471"/>
        <end position="1481"/>
    </location>
</feature>
<feature type="binding site" evidence="1">
    <location>
        <position position="401"/>
    </location>
    <ligand>
        <name>ATP</name>
        <dbReference type="ChEBI" id="CHEBI:30616"/>
        <label>1</label>
    </ligand>
</feature>
<feature type="binding site" evidence="5">
    <location>
        <begin position="457"/>
        <end position="464"/>
    </location>
    <ligand>
        <name>ATP</name>
        <dbReference type="ChEBI" id="CHEBI:30616"/>
        <label>1</label>
    </ligand>
</feature>
<feature type="binding site" evidence="2">
    <location>
        <position position="492"/>
    </location>
    <ligand>
        <name>ATP</name>
        <dbReference type="ChEBI" id="CHEBI:30616"/>
        <label>1</label>
    </ligand>
</feature>
<feature type="binding site" evidence="1">
    <location>
        <position position="1220"/>
    </location>
    <ligand>
        <name>ATP</name>
        <dbReference type="ChEBI" id="CHEBI:30616"/>
        <label>2</label>
    </ligand>
</feature>
<feature type="binding site" evidence="5">
    <location>
        <begin position="1245"/>
        <end position="1252"/>
    </location>
    <ligand>
        <name>ATP</name>
        <dbReference type="ChEBI" id="CHEBI:30616"/>
        <label>2</label>
    </ligand>
</feature>
<feature type="modified residue" description="Phosphoserine" evidence="1">
    <location>
        <position position="548"/>
    </location>
</feature>
<feature type="modified residue" description="Phosphoserine" evidence="1">
    <location>
        <position position="659"/>
    </location>
</feature>
<feature type="modified residue" description="Phosphoserine; by PKA" evidence="1">
    <location>
        <position position="669"/>
    </location>
</feature>
<feature type="modified residue" description="Phosphoserine" evidence="1">
    <location>
        <position position="685"/>
    </location>
</feature>
<feature type="modified residue" description="Phosphoserine" evidence="1">
    <location>
        <position position="699"/>
    </location>
</feature>
<feature type="modified residue" description="Phosphoserine" evidence="1">
    <location>
        <position position="711"/>
    </location>
</feature>
<feature type="modified residue" description="Phosphothreonine" evidence="1">
    <location>
        <position position="716"/>
    </location>
</feature>
<feature type="modified residue" description="Phosphoserine" evidence="1">
    <location>
        <position position="736"/>
    </location>
</feature>
<feature type="modified residue" description="Phosphoserine" evidence="1">
    <location>
        <position position="767"/>
    </location>
</feature>
<feature type="modified residue" description="Phosphoserine" evidence="1">
    <location>
        <position position="790"/>
    </location>
</feature>
<feature type="modified residue" description="Phosphoserine" evidence="1">
    <location>
        <position position="795"/>
    </location>
</feature>
<feature type="modified residue" description="Phosphoserine" evidence="1">
    <location>
        <position position="813"/>
    </location>
</feature>
<feature type="modified residue" description="Phosphoserine" evidence="1">
    <location>
        <position position="1457"/>
    </location>
</feature>
<feature type="lipid moiety-binding region" description="S-palmitoyl cysteine" evidence="1">
    <location>
        <position position="523"/>
    </location>
</feature>
<feature type="lipid moiety-binding region" description="S-palmitoyl cysteine" evidence="1">
    <location>
        <position position="1396"/>
    </location>
</feature>
<feature type="glycosylation site" description="N-linked (GlcNAc...) asparagine" evidence="4">
    <location>
        <position position="894"/>
    </location>
</feature>
<feature type="glycosylation site" description="N-linked (GlcNAc...) asparagine" evidence="4">
    <location>
        <position position="900"/>
    </location>
</feature>
<feature type="cross-link" description="Glycyl lysine isopeptide (Lys-Gly) (interchain with G-Cter in ubiquitin)" evidence="1">
    <location>
        <position position="687"/>
    </location>
</feature>
<evidence type="ECO:0000250" key="1">
    <source>
        <dbReference type="UniProtKB" id="P13569"/>
    </source>
</evidence>
<evidence type="ECO:0000250" key="2">
    <source>
        <dbReference type="UniProtKB" id="P26361"/>
    </source>
</evidence>
<evidence type="ECO:0000250" key="3">
    <source>
        <dbReference type="UniProtKB" id="P34158"/>
    </source>
</evidence>
<evidence type="ECO:0000255" key="4"/>
<evidence type="ECO:0000255" key="5">
    <source>
        <dbReference type="PROSITE-ProRule" id="PRU00434"/>
    </source>
</evidence>
<evidence type="ECO:0000255" key="6">
    <source>
        <dbReference type="PROSITE-ProRule" id="PRU00441"/>
    </source>
</evidence>
<evidence type="ECO:0000256" key="7">
    <source>
        <dbReference type="SAM" id="MobiDB-lite"/>
    </source>
</evidence>
<evidence type="ECO:0000305" key="8"/>
<comment type="function">
    <text evidence="1 2">Epithelial ion channel that plays an important role in the regulation of epithelial ion and water transport and fluid homeostasis. Mediates the transport of chloride ions across the cell membrane (By similarity). Possesses an intrinsic ATPase activity and utilizes ATP to gate its channel; the passive flow of anions through the channel is gated by cycles of ATP binding and hydrolysis by the ATP-binding domains (By similarity). The ion channel is also permeable to HCO(3)(-); selectivity depends on the extracellular chloride concentration. Exerts its function also by modulating the activity of other ion channels and transporters. Contributes to the regulation of the pH and the ion content of the epithelial fluid layer. Modulates the activity of the epithelial sodium channel (ENaC) complex, in part by regulating the cell surface expression of the ENaC complex. May regulate bicarbonate secretion and salvage in epithelial cells by regulating the transporter SLC4A7. Can inhibit the chloride channel activity of ANO1 (By similarity). Plays a role in the chloride and bicarbonate homeostasis during sperm epididymal maturation and capacitation (By similarity).</text>
</comment>
<comment type="catalytic activity">
    <reaction evidence="1">
        <text>ATP + H2O + closed Cl(-) channel = ADP + phosphate + open Cl(-) channel.</text>
        <dbReference type="EC" id="5.6.1.6"/>
    </reaction>
</comment>
<comment type="catalytic activity">
    <reaction evidence="1">
        <text>chloride(in) = chloride(out)</text>
        <dbReference type="Rhea" id="RHEA:29823"/>
        <dbReference type="ChEBI" id="CHEBI:17996"/>
    </reaction>
</comment>
<comment type="catalytic activity">
    <reaction evidence="1">
        <text>hydrogencarbonate(in) = hydrogencarbonate(out)</text>
        <dbReference type="Rhea" id="RHEA:28695"/>
        <dbReference type="ChEBI" id="CHEBI:17544"/>
    </reaction>
</comment>
<comment type="catalytic activity">
    <reaction evidence="1">
        <text>ATP + H2O = ADP + phosphate + H(+)</text>
        <dbReference type="Rhea" id="RHEA:13065"/>
        <dbReference type="ChEBI" id="CHEBI:15377"/>
        <dbReference type="ChEBI" id="CHEBI:15378"/>
        <dbReference type="ChEBI" id="CHEBI:30616"/>
        <dbReference type="ChEBI" id="CHEBI:43474"/>
        <dbReference type="ChEBI" id="CHEBI:456216"/>
    </reaction>
    <physiologicalReaction direction="left-to-right" evidence="1">
        <dbReference type="Rhea" id="RHEA:13066"/>
    </physiologicalReaction>
</comment>
<comment type="subunit">
    <text evidence="1 2 3">Monomer; does not require oligomerization for channel activity. May form oligomers in the membrane (By similarity). Interacts with SLC26A3, SLC26A6 and NHERF1 (By similarity). Interacts with SHANK2 (By similarity). Interacts with MYO6 (By similarity). Interacts (via C-terminus) with GOPC (via PDZ domain); this promotes CFTR internalization and thereby decreases channel activity. Interacts with SLC4A7 through NHERF1. Found in a complex with MYO5B and RAB11A. Interacts with ANO1. Interacts with SLC26A8 (By similarity). Interacts with AHCYL1; the interaction increases CFTR activity (By similarity). Interacts with CSE1L (By similarity). The core-glycosylated form interacts with GORASP2 (via PDZ GRASP-type 1 domain) in respone to ER stress (By similarity). Interacts with MARCHF2; the interaction leads to CFTR ubiqtuitination and degradation (By similarity). Interacts with ADGRG2 (By similarity).</text>
</comment>
<comment type="subcellular location">
    <subcellularLocation>
        <location evidence="2">Apical cell membrane</location>
        <topology evidence="1">Multi-pass membrane protein</topology>
    </subcellularLocation>
    <subcellularLocation>
        <location evidence="1">Early endosome membrane</location>
        <topology evidence="1">Multi-pass membrane protein</topology>
    </subcellularLocation>
    <subcellularLocation>
        <location evidence="2">Cell membrane</location>
        <topology evidence="1">Multi-pass membrane protein</topology>
    </subcellularLocation>
    <subcellularLocation>
        <location evidence="1">Recycling endosome membrane</location>
        <topology evidence="1">Multi-pass membrane protein</topology>
    </subcellularLocation>
    <subcellularLocation>
        <location evidence="1">Endoplasmic reticulum membrane</location>
        <topology evidence="1">Multi-pass membrane protein</topology>
    </subcellularLocation>
    <subcellularLocation>
        <location evidence="3">Nucleus</location>
    </subcellularLocation>
    <text evidence="1 3">The channel is internalized from the cell surface into an endosomal recycling compartment, from where it is recycled to the cell membrane. In the oviduct and bronchus, detected on the apical side of epithelial cells, but not associated with cilia. In Sertoli cells, a processed product is detected in the nucleus. ER stress induces GORASP2-mediated unconventional (ER/Golgi-independent) trafficking of core-glycosylated CFTR to cell membrane.</text>
</comment>
<comment type="domain">
    <text evidence="1 2">Binds and hydrolyzes ATP via the two cytoplasmic ABC transporter nucleotide-binding domains. The two ATP-binding domains interact with each other, forming a head-to-tail dimer. Normal ATPase activity requires interaction between the two domains. The first ABC transporter nucleotide-binding domain has no ATPase activity by itself.</text>
</comment>
<comment type="domain">
    <text evidence="1">The PDZ-binding motif mediates interactions with GOPC and with the SLC4A7, NHERF1/EBP50 complex.</text>
</comment>
<comment type="domain">
    <text evidence="1">The disordered R region mediates channel activation when it is phosphorylated, but not in the absence of phosphorylation.</text>
</comment>
<comment type="PTM">
    <text evidence="1">N-glycosylated.</text>
</comment>
<comment type="PTM">
    <text evidence="1">Phosphorylated; cAMP treatment promotes phosphorylation and activates the channel. Dephosphorylation decreases the ATPase activity (in vitro). Phosphorylation at PKA sites activates the channel. Phosphorylation at PKC sites enhances the response to phosphorylation by PKA. Phosphorylated by AMPK; this inhibits channel activity.</text>
</comment>
<comment type="PTM">
    <text evidence="1">Ubiquitinated, leading to its degradation in the lysosome. Deubiquitination by USP10 in early endosomes enhances its endocytic recycling to the cell membrane. Ubiquitinated by RNF185 during ER stress. Ubiquitinated by MARCHF2 (By similarity).</text>
</comment>
<comment type="similarity">
    <text evidence="8">Belongs to the ABC transporter superfamily. ABCC family. CFTR transporter (TC 3.A.1.202) subfamily.</text>
</comment>
<sequence>MQRSPLEKASVVSKLFFSWTRPILKKGYRQRLELSDIYHISSSDSADNLSEKLEREWDRELASKKNPKLINALRRCFFWRFMFYGIILYLGEVTKAVQPLLLGRIIASYDPDNKVERSIAIYLGIGLCLLFIVRTLLLHPAIFGLHHIGMQMRIAMFSLIYKKTLKLSSRVLDKISIGQLVSLLSNNLNKFDEGLALAHFVWIAPLQVTLLMGLLWELLQAFTFCGLAFLVVLAFLQAGLGKMMMKYRDQRAGKINERLVITSEIIENIQSVKAYCWEEAMEKIIENLRQTELKLTRKAAYVRYLNSSAFFFSGFFVVFLSVLPYALLKGIILRKIFTTISFCIVLRMAVTRQFPWAVQTWYDSLGAINKIQDFLQKQEYKTLEYNLTTTDVVMENVTAYWEEGFSKLFEKAKENNNNRKISNGDNNLFFSNLLLGAPVLKDISFKIERGQLMAVAGSTGAGKTSLLMMIMGELEPSEGKIKHSGRISFCSQYSWIMPGTIKDNIIFGVSYDEYRYRSVIKACQLEEDISKFAEKDNIVLGEGGITLSGGQRARISLARAVYKDADLYLLDSPFGYLDVLTEKEIFESCVCKLMANKTRILVTSKMEHLKQADKILILHEGSIYFYGTFSELQNQRPDFSSKLMGCDTFDQFTAERRNSIITETLRRFSLEGDTSVSWNETKKPSFKQTGEFGEKRKNSILNSINSKRKFSVAQKTSLQMNGIEETSDEPLERKLSLVPHSEPGEGILPRSNAVNSGPTFLGGRRQSVLNLMTCSSVNQGQSIHRKTATSTRKMSLAPQASLAEIDIYSRRLSQDTGLEISEEINEEDLRDCFFDDVENIPAVTTWNTYLRYITVHKSLMFVLIWCLVVFLAEVAASLVVLCLFPKILFQDKGNSTKSANNSYAVIITSTSSYYIFYIYVGVADTLLALGLFRGLPLVHTLITVSKTLHHKMLQSVLQAPMSTLNTLKTGGILNRFSKDIAVLDDLLPLTIFDFVQLLLIVIGAVVVVSVLQPYIFLATVPVIAAFILLRAYFLHTSQQLKQLESEGRSPIFTHLVTSLKGLWTLRAFGRQPYFETLFHKALNLHTANWFLYLSTLRWFQMRIEMIFVIFFIAVTFISILTTGEGEGRVGIILTLAMNIMGTLQWAVNSSIDVDSLMRSVSRVFKFIDMPTEDGKPNNSFRPSKDSQLSKVMIIENQHVKKDDIWPSGGQMTVKDLTAKYIDGGNAILENISFSISPGQRVGLLGRTGSGKSTLLLAFLRLLNTKGEIQIDGVSWDSITLQQWRKAFGVIPQKVFIFSGTFRKNLDPYGQWSDQEIWKVADEVGLRSVIEQFPGKLDFVLVDGGCVLSHGHKQLMCLARSVLSKAKILLLDEPSAHLDPITYQIIRRTLKQAFADCTVILSEHRIEAMLECQRFLVIEENKVRQYDSIQRMLSEKSLFRQAISPADRLKLLPQRNSSRQKSRSNIAALKEETEEEVQETKL</sequence>
<organism>
    <name type="scientific">Muntiacus muntjak</name>
    <name type="common">Barking deer</name>
    <name type="synonym">Indian muntjac</name>
    <dbReference type="NCBI Taxonomy" id="9888"/>
    <lineage>
        <taxon>Eukaryota</taxon>
        <taxon>Metazoa</taxon>
        <taxon>Chordata</taxon>
        <taxon>Craniata</taxon>
        <taxon>Vertebrata</taxon>
        <taxon>Euteleostomi</taxon>
        <taxon>Mammalia</taxon>
        <taxon>Eutheria</taxon>
        <taxon>Laurasiatheria</taxon>
        <taxon>Artiodactyla</taxon>
        <taxon>Ruminantia</taxon>
        <taxon>Pecora</taxon>
        <taxon>Cervidae</taxon>
        <taxon>Muntiacinae</taxon>
        <taxon>Muntiacus</taxon>
    </lineage>
</organism>
<accession>Q09YJ4</accession>
<protein>
    <recommendedName>
        <fullName evidence="1">Cystic fibrosis transmembrane conductance regulator</fullName>
        <shortName>CFTR</shortName>
    </recommendedName>
    <alternativeName>
        <fullName>ATP-binding cassette sub-family C member 7</fullName>
    </alternativeName>
    <alternativeName>
        <fullName>Channel conductance-controlling ATPase</fullName>
        <ecNumber evidence="1">5.6.1.6</ecNumber>
    </alternativeName>
    <alternativeName>
        <fullName>cAMP-dependent chloride channel</fullName>
    </alternativeName>
</protein>
<keyword id="KW-0067">ATP-binding</keyword>
<keyword id="KW-1003">Cell membrane</keyword>
<keyword id="KW-0868">Chloride</keyword>
<keyword id="KW-0869">Chloride channel</keyword>
<keyword id="KW-0256">Endoplasmic reticulum</keyword>
<keyword id="KW-0967">Endosome</keyword>
<keyword id="KW-0325">Glycoprotein</keyword>
<keyword id="KW-0407">Ion channel</keyword>
<keyword id="KW-0406">Ion transport</keyword>
<keyword id="KW-0413">Isomerase</keyword>
<keyword id="KW-1017">Isopeptide bond</keyword>
<keyword id="KW-0449">Lipoprotein</keyword>
<keyword id="KW-0472">Membrane</keyword>
<keyword id="KW-0547">Nucleotide-binding</keyword>
<keyword id="KW-0539">Nucleus</keyword>
<keyword id="KW-0564">Palmitate</keyword>
<keyword id="KW-0597">Phosphoprotein</keyword>
<keyword id="KW-0677">Repeat</keyword>
<keyword id="KW-0812">Transmembrane</keyword>
<keyword id="KW-1133">Transmembrane helix</keyword>
<keyword id="KW-0813">Transport</keyword>
<keyword id="KW-0832">Ubl conjugation</keyword>
<name>CFTR_MUNMU</name>
<proteinExistence type="inferred from homology"/>
<dbReference type="EC" id="5.6.1.6" evidence="1"/>
<dbReference type="EMBL" id="DP000178">
    <property type="protein sequence ID" value="ABI75286.1"/>
    <property type="molecule type" value="Genomic_DNA"/>
</dbReference>
<dbReference type="SMR" id="Q09YJ4"/>
<dbReference type="GlyCosmos" id="Q09YJ4">
    <property type="glycosylation" value="2 sites, No reported glycans"/>
</dbReference>
<dbReference type="GO" id="GO:0016324">
    <property type="term" value="C:apical plasma membrane"/>
    <property type="evidence" value="ECO:0000250"/>
    <property type="project" value="UniProtKB"/>
</dbReference>
<dbReference type="GO" id="GO:0034707">
    <property type="term" value="C:chloride channel complex"/>
    <property type="evidence" value="ECO:0007669"/>
    <property type="project" value="UniProtKB-KW"/>
</dbReference>
<dbReference type="GO" id="GO:0005829">
    <property type="term" value="C:cytosol"/>
    <property type="evidence" value="ECO:0007669"/>
    <property type="project" value="TreeGrafter"/>
</dbReference>
<dbReference type="GO" id="GO:0005769">
    <property type="term" value="C:early endosome"/>
    <property type="evidence" value="ECO:0000250"/>
    <property type="project" value="UniProtKB"/>
</dbReference>
<dbReference type="GO" id="GO:0031901">
    <property type="term" value="C:early endosome membrane"/>
    <property type="evidence" value="ECO:0007669"/>
    <property type="project" value="UniProtKB-SubCell"/>
</dbReference>
<dbReference type="GO" id="GO:0005789">
    <property type="term" value="C:endoplasmic reticulum membrane"/>
    <property type="evidence" value="ECO:0000250"/>
    <property type="project" value="UniProtKB"/>
</dbReference>
<dbReference type="GO" id="GO:0016020">
    <property type="term" value="C:membrane"/>
    <property type="evidence" value="ECO:0000250"/>
    <property type="project" value="UniProtKB"/>
</dbReference>
<dbReference type="GO" id="GO:0005634">
    <property type="term" value="C:nucleus"/>
    <property type="evidence" value="ECO:0000250"/>
    <property type="project" value="UniProtKB"/>
</dbReference>
<dbReference type="GO" id="GO:0005886">
    <property type="term" value="C:plasma membrane"/>
    <property type="evidence" value="ECO:0000250"/>
    <property type="project" value="UniProtKB"/>
</dbReference>
<dbReference type="GO" id="GO:0055038">
    <property type="term" value="C:recycling endosome membrane"/>
    <property type="evidence" value="ECO:0007669"/>
    <property type="project" value="UniProtKB-SubCell"/>
</dbReference>
<dbReference type="GO" id="GO:0140359">
    <property type="term" value="F:ABC-type transporter activity"/>
    <property type="evidence" value="ECO:0007669"/>
    <property type="project" value="InterPro"/>
</dbReference>
<dbReference type="GO" id="GO:0005524">
    <property type="term" value="F:ATP binding"/>
    <property type="evidence" value="ECO:0007669"/>
    <property type="project" value="UniProtKB-KW"/>
</dbReference>
<dbReference type="GO" id="GO:0016887">
    <property type="term" value="F:ATP hydrolysis activity"/>
    <property type="evidence" value="ECO:0000250"/>
    <property type="project" value="UniProtKB"/>
</dbReference>
<dbReference type="GO" id="GO:0015106">
    <property type="term" value="F:bicarbonate transmembrane transporter activity"/>
    <property type="evidence" value="ECO:0000250"/>
    <property type="project" value="UniProtKB"/>
</dbReference>
<dbReference type="GO" id="GO:0005254">
    <property type="term" value="F:chloride channel activity"/>
    <property type="evidence" value="ECO:0000250"/>
    <property type="project" value="UniProtKB"/>
</dbReference>
<dbReference type="GO" id="GO:0019869">
    <property type="term" value="F:chloride channel inhibitor activity"/>
    <property type="evidence" value="ECO:0000250"/>
    <property type="project" value="UniProtKB"/>
</dbReference>
<dbReference type="GO" id="GO:0015108">
    <property type="term" value="F:chloride transmembrane transporter activity"/>
    <property type="evidence" value="ECO:0000250"/>
    <property type="project" value="UniProtKB"/>
</dbReference>
<dbReference type="GO" id="GO:0005260">
    <property type="term" value="F:intracellularly ATP-gated chloride channel activity"/>
    <property type="evidence" value="ECO:0000250"/>
    <property type="project" value="UniProtKB"/>
</dbReference>
<dbReference type="GO" id="GO:0015701">
    <property type="term" value="P:bicarbonate transport"/>
    <property type="evidence" value="ECO:0000250"/>
    <property type="project" value="UniProtKB"/>
</dbReference>
<dbReference type="GO" id="GO:0071320">
    <property type="term" value="P:cellular response to cAMP"/>
    <property type="evidence" value="ECO:0000250"/>
    <property type="project" value="UniProtKB"/>
</dbReference>
<dbReference type="GO" id="GO:1904322">
    <property type="term" value="P:cellular response to forskolin"/>
    <property type="evidence" value="ECO:0000250"/>
    <property type="project" value="UniProtKB"/>
</dbReference>
<dbReference type="GO" id="GO:1902476">
    <property type="term" value="P:chloride transmembrane transport"/>
    <property type="evidence" value="ECO:0000250"/>
    <property type="project" value="UniProtKB"/>
</dbReference>
<dbReference type="GO" id="GO:0051454">
    <property type="term" value="P:intracellular pH elevation"/>
    <property type="evidence" value="ECO:0000250"/>
    <property type="project" value="UniProtKB"/>
</dbReference>
<dbReference type="GO" id="GO:0060081">
    <property type="term" value="P:membrane hyperpolarization"/>
    <property type="evidence" value="ECO:0000250"/>
    <property type="project" value="UniProtKB"/>
</dbReference>
<dbReference type="GO" id="GO:0050891">
    <property type="term" value="P:multicellular organismal-level water homeostasis"/>
    <property type="evidence" value="ECO:0000250"/>
    <property type="project" value="UniProtKB"/>
</dbReference>
<dbReference type="GO" id="GO:0034976">
    <property type="term" value="P:response to endoplasmic reticulum stress"/>
    <property type="evidence" value="ECO:0000250"/>
    <property type="project" value="UniProtKB"/>
</dbReference>
<dbReference type="GO" id="GO:0048240">
    <property type="term" value="P:sperm capacitation"/>
    <property type="evidence" value="ECO:0000250"/>
    <property type="project" value="UniProtKB"/>
</dbReference>
<dbReference type="GO" id="GO:0035377">
    <property type="term" value="P:transepithelial water transport"/>
    <property type="evidence" value="ECO:0000250"/>
    <property type="project" value="UniProtKB"/>
</dbReference>
<dbReference type="CDD" id="cd18594">
    <property type="entry name" value="ABC_6TM_CFTR_D1"/>
    <property type="match status" value="1"/>
</dbReference>
<dbReference type="CDD" id="cd18600">
    <property type="entry name" value="ABC_6TM_CFTR_D2"/>
    <property type="match status" value="1"/>
</dbReference>
<dbReference type="CDD" id="cd03291">
    <property type="entry name" value="ABCC_CFTR1"/>
    <property type="match status" value="1"/>
</dbReference>
<dbReference type="FunFam" id="1.20.1560.10:FF:000017">
    <property type="entry name" value="Cystic fibrosis transmembrane conductance regulator"/>
    <property type="match status" value="1"/>
</dbReference>
<dbReference type="FunFam" id="1.20.1560.10:FF:000019">
    <property type="entry name" value="Cystic fibrosis transmembrane conductance regulator"/>
    <property type="match status" value="1"/>
</dbReference>
<dbReference type="FunFam" id="3.40.50.300:FF:000581">
    <property type="entry name" value="Cystic fibrosis transmembrane conductance regulator"/>
    <property type="match status" value="1"/>
</dbReference>
<dbReference type="FunFam" id="3.40.50.300:FF:000591">
    <property type="entry name" value="Cystic fibrosis transmembrane conductance regulator"/>
    <property type="match status" value="1"/>
</dbReference>
<dbReference type="Gene3D" id="1.20.1560.10">
    <property type="entry name" value="ABC transporter type 1, transmembrane domain"/>
    <property type="match status" value="2"/>
</dbReference>
<dbReference type="Gene3D" id="3.40.50.300">
    <property type="entry name" value="P-loop containing nucleotide triphosphate hydrolases"/>
    <property type="match status" value="2"/>
</dbReference>
<dbReference type="InterPro" id="IPR003593">
    <property type="entry name" value="AAA+_ATPase"/>
</dbReference>
<dbReference type="InterPro" id="IPR011527">
    <property type="entry name" value="ABC1_TM_dom"/>
</dbReference>
<dbReference type="InterPro" id="IPR036640">
    <property type="entry name" value="ABC1_TM_sf"/>
</dbReference>
<dbReference type="InterPro" id="IPR003439">
    <property type="entry name" value="ABC_transporter-like_ATP-bd"/>
</dbReference>
<dbReference type="InterPro" id="IPR017871">
    <property type="entry name" value="ABC_transporter-like_CS"/>
</dbReference>
<dbReference type="InterPro" id="IPR050173">
    <property type="entry name" value="ABC_transporter_C-like"/>
</dbReference>
<dbReference type="InterPro" id="IPR009147">
    <property type="entry name" value="CFTR/ABCC7"/>
</dbReference>
<dbReference type="InterPro" id="IPR047082">
    <property type="entry name" value="CFTR1_ATP-bd_dom1"/>
</dbReference>
<dbReference type="InterPro" id="IPR025837">
    <property type="entry name" value="CFTR_reg_dom"/>
</dbReference>
<dbReference type="InterPro" id="IPR027417">
    <property type="entry name" value="P-loop_NTPase"/>
</dbReference>
<dbReference type="NCBIfam" id="TIGR01271">
    <property type="entry name" value="CFTR_protein"/>
    <property type="match status" value="1"/>
</dbReference>
<dbReference type="PANTHER" id="PTHR24223">
    <property type="entry name" value="ATP-BINDING CASSETTE SUB-FAMILY C"/>
    <property type="match status" value="1"/>
</dbReference>
<dbReference type="PANTHER" id="PTHR24223:SF19">
    <property type="entry name" value="CYSTIC FIBROSIS TRANSMEMBRANE CONDUCTANCE REGULATOR"/>
    <property type="match status" value="1"/>
</dbReference>
<dbReference type="Pfam" id="PF00664">
    <property type="entry name" value="ABC_membrane"/>
    <property type="match status" value="2"/>
</dbReference>
<dbReference type="Pfam" id="PF00005">
    <property type="entry name" value="ABC_tran"/>
    <property type="match status" value="2"/>
</dbReference>
<dbReference type="Pfam" id="PF14396">
    <property type="entry name" value="CFTR_R"/>
    <property type="match status" value="1"/>
</dbReference>
<dbReference type="PRINTS" id="PR01851">
    <property type="entry name" value="CYSFIBREGLTR"/>
</dbReference>
<dbReference type="SMART" id="SM00382">
    <property type="entry name" value="AAA"/>
    <property type="match status" value="2"/>
</dbReference>
<dbReference type="SUPFAM" id="SSF90123">
    <property type="entry name" value="ABC transporter transmembrane region"/>
    <property type="match status" value="2"/>
</dbReference>
<dbReference type="SUPFAM" id="SSF52540">
    <property type="entry name" value="P-loop containing nucleoside triphosphate hydrolases"/>
    <property type="match status" value="2"/>
</dbReference>
<dbReference type="PROSITE" id="PS50929">
    <property type="entry name" value="ABC_TM1F"/>
    <property type="match status" value="2"/>
</dbReference>
<dbReference type="PROSITE" id="PS00211">
    <property type="entry name" value="ABC_TRANSPORTER_1"/>
    <property type="match status" value="1"/>
</dbReference>
<dbReference type="PROSITE" id="PS50893">
    <property type="entry name" value="ABC_TRANSPORTER_2"/>
    <property type="match status" value="2"/>
</dbReference>